<feature type="chain" id="PRO_0000127914" description="Uncharacterized protein AF_0737">
    <location>
        <begin position="1"/>
        <end position="67"/>
    </location>
</feature>
<sequence>MKLKIKFVGFDQKEVEVEVNGQRYSEILESLGINPETVVVVKDNIPVPVDDVAEGGEVKVVRVISGG</sequence>
<dbReference type="EMBL" id="AE000782">
    <property type="protein sequence ID" value="AAB90514.1"/>
    <property type="molecule type" value="Genomic_DNA"/>
</dbReference>
<dbReference type="PIR" id="A69342">
    <property type="entry name" value="A69342"/>
</dbReference>
<dbReference type="RefSeq" id="WP_010878240.1">
    <property type="nucleotide sequence ID" value="NC_000917.1"/>
</dbReference>
<dbReference type="SMR" id="O29521"/>
<dbReference type="STRING" id="224325.AF_0737"/>
<dbReference type="PaxDb" id="224325-AF_0737"/>
<dbReference type="EnsemblBacteria" id="AAB90514">
    <property type="protein sequence ID" value="AAB90514"/>
    <property type="gene ID" value="AF_0737"/>
</dbReference>
<dbReference type="KEGG" id="afu:AF_0737"/>
<dbReference type="eggNOG" id="arCOG00535">
    <property type="taxonomic scope" value="Archaea"/>
</dbReference>
<dbReference type="HOGENOM" id="CLU_114601_9_3_2"/>
<dbReference type="OrthoDB" id="51627at2157"/>
<dbReference type="Proteomes" id="UP000002199">
    <property type="component" value="Chromosome"/>
</dbReference>
<dbReference type="Gene3D" id="3.10.20.30">
    <property type="match status" value="1"/>
</dbReference>
<dbReference type="InterPro" id="IPR012675">
    <property type="entry name" value="Beta-grasp_dom_sf"/>
</dbReference>
<dbReference type="InterPro" id="IPR016155">
    <property type="entry name" value="Mopterin_synth/thiamin_S_b"/>
</dbReference>
<dbReference type="InterPro" id="IPR053833">
    <property type="entry name" value="SAMP2"/>
</dbReference>
<dbReference type="Pfam" id="PF21965">
    <property type="entry name" value="SAMP2"/>
    <property type="match status" value="1"/>
</dbReference>
<dbReference type="SUPFAM" id="SSF54285">
    <property type="entry name" value="MoaD/ThiS"/>
    <property type="match status" value="1"/>
</dbReference>
<organism>
    <name type="scientific">Archaeoglobus fulgidus (strain ATCC 49558 / DSM 4304 / JCM 9628 / NBRC 100126 / VC-16)</name>
    <dbReference type="NCBI Taxonomy" id="224325"/>
    <lineage>
        <taxon>Archaea</taxon>
        <taxon>Methanobacteriati</taxon>
        <taxon>Methanobacteriota</taxon>
        <taxon>Archaeoglobi</taxon>
        <taxon>Archaeoglobales</taxon>
        <taxon>Archaeoglobaceae</taxon>
        <taxon>Archaeoglobus</taxon>
    </lineage>
</organism>
<reference key="1">
    <citation type="journal article" date="1997" name="Nature">
        <title>The complete genome sequence of the hyperthermophilic, sulphate-reducing archaeon Archaeoglobus fulgidus.</title>
        <authorList>
            <person name="Klenk H.-P."/>
            <person name="Clayton R.A."/>
            <person name="Tomb J.-F."/>
            <person name="White O."/>
            <person name="Nelson K.E."/>
            <person name="Ketchum K.A."/>
            <person name="Dodson R.J."/>
            <person name="Gwinn M.L."/>
            <person name="Hickey E.K."/>
            <person name="Peterson J.D."/>
            <person name="Richardson D.L."/>
            <person name="Kerlavage A.R."/>
            <person name="Graham D.E."/>
            <person name="Kyrpides N.C."/>
            <person name="Fleischmann R.D."/>
            <person name="Quackenbush J."/>
            <person name="Lee N.H."/>
            <person name="Sutton G.G."/>
            <person name="Gill S.R."/>
            <person name="Kirkness E.F."/>
            <person name="Dougherty B.A."/>
            <person name="McKenney K."/>
            <person name="Adams M.D."/>
            <person name="Loftus B.J."/>
            <person name="Peterson S.N."/>
            <person name="Reich C.I."/>
            <person name="McNeil L.K."/>
            <person name="Badger J.H."/>
            <person name="Glodek A."/>
            <person name="Zhou L."/>
            <person name="Overbeek R."/>
            <person name="Gocayne J.D."/>
            <person name="Weidman J.F."/>
            <person name="McDonald L.A."/>
            <person name="Utterback T.R."/>
            <person name="Cotton M.D."/>
            <person name="Spriggs T."/>
            <person name="Artiach P."/>
            <person name="Kaine B.P."/>
            <person name="Sykes S.M."/>
            <person name="Sadow P.W."/>
            <person name="D'Andrea K.P."/>
            <person name="Bowman C."/>
            <person name="Fujii C."/>
            <person name="Garland S.A."/>
            <person name="Mason T.M."/>
            <person name="Olsen G.J."/>
            <person name="Fraser C.M."/>
            <person name="Smith H.O."/>
            <person name="Woese C.R."/>
            <person name="Venter J.C."/>
        </authorList>
    </citation>
    <scope>NUCLEOTIDE SEQUENCE [LARGE SCALE GENOMIC DNA]</scope>
    <source>
        <strain>ATCC 49558 / DSM 4304 / JCM 9628 / NBRC 100126 / VC-16</strain>
    </source>
</reference>
<accession>O29521</accession>
<keyword id="KW-1185">Reference proteome</keyword>
<protein>
    <recommendedName>
        <fullName>Uncharacterized protein AF_0737</fullName>
    </recommendedName>
</protein>
<proteinExistence type="predicted"/>
<gene>
    <name type="ordered locus">AF_0737</name>
</gene>
<name>Y737_ARCFU</name>